<dbReference type="EC" id="1.14.14.51" evidence="3 4"/>
<dbReference type="EMBL" id="AY281025">
    <property type="protein sequence ID" value="AAQ18706.1"/>
    <property type="molecule type" value="mRNA"/>
</dbReference>
<dbReference type="SMR" id="Q6WKZ1"/>
<dbReference type="GO" id="GO:0005789">
    <property type="term" value="C:endoplasmic reticulum membrane"/>
    <property type="evidence" value="ECO:0007669"/>
    <property type="project" value="UniProtKB-SubCell"/>
</dbReference>
<dbReference type="GO" id="GO:0018675">
    <property type="term" value="F:(S)-limonene 6-monooxygenase activity"/>
    <property type="evidence" value="ECO:0007669"/>
    <property type="project" value="UniProtKB-EC"/>
</dbReference>
<dbReference type="GO" id="GO:0020037">
    <property type="term" value="F:heme binding"/>
    <property type="evidence" value="ECO:0007669"/>
    <property type="project" value="InterPro"/>
</dbReference>
<dbReference type="GO" id="GO:0005506">
    <property type="term" value="F:iron ion binding"/>
    <property type="evidence" value="ECO:0007669"/>
    <property type="project" value="InterPro"/>
</dbReference>
<dbReference type="CDD" id="cd11072">
    <property type="entry name" value="CYP71-like"/>
    <property type="match status" value="1"/>
</dbReference>
<dbReference type="FunFam" id="1.10.630.10:FF:000043">
    <property type="entry name" value="Cytochrome P450 99A2"/>
    <property type="match status" value="1"/>
</dbReference>
<dbReference type="Gene3D" id="1.10.630.10">
    <property type="entry name" value="Cytochrome P450"/>
    <property type="match status" value="1"/>
</dbReference>
<dbReference type="InterPro" id="IPR052306">
    <property type="entry name" value="CYP450_71D"/>
</dbReference>
<dbReference type="InterPro" id="IPR001128">
    <property type="entry name" value="Cyt_P450"/>
</dbReference>
<dbReference type="InterPro" id="IPR017972">
    <property type="entry name" value="Cyt_P450_CS"/>
</dbReference>
<dbReference type="InterPro" id="IPR002401">
    <property type="entry name" value="Cyt_P450_E_grp-I"/>
</dbReference>
<dbReference type="InterPro" id="IPR036396">
    <property type="entry name" value="Cyt_P450_sf"/>
</dbReference>
<dbReference type="PANTHER" id="PTHR47953:SF19">
    <property type="entry name" value="OS06G0641600 PROTEIN"/>
    <property type="match status" value="1"/>
</dbReference>
<dbReference type="PANTHER" id="PTHR47953">
    <property type="entry name" value="OS08G0105600 PROTEIN"/>
    <property type="match status" value="1"/>
</dbReference>
<dbReference type="Pfam" id="PF00067">
    <property type="entry name" value="p450"/>
    <property type="match status" value="1"/>
</dbReference>
<dbReference type="PRINTS" id="PR00463">
    <property type="entry name" value="EP450I"/>
</dbReference>
<dbReference type="PRINTS" id="PR00385">
    <property type="entry name" value="P450"/>
</dbReference>
<dbReference type="SUPFAM" id="SSF48264">
    <property type="entry name" value="Cytochrome P450"/>
    <property type="match status" value="1"/>
</dbReference>
<dbReference type="PROSITE" id="PS00086">
    <property type="entry name" value="CYTOCHROME_P450"/>
    <property type="match status" value="1"/>
</dbReference>
<proteinExistence type="evidence at protein level"/>
<reference key="1">
    <citation type="journal article" date="2003" name="Phytochemistry">
        <title>Molecular evaluation of a spearmint mutant altered in the expression of limonene hydroxylases that direct essential oil monoterpene biosynthesis.</title>
        <authorList>
            <person name="Bertea C."/>
            <person name="Schalk M."/>
            <person name="Mau C.J.D."/>
            <person name="Karp F."/>
            <person name="Wildung M.R."/>
            <person name="Croteau R."/>
        </authorList>
    </citation>
    <scope>NUCLEOTIDE SEQUENCE [MRNA]</scope>
    <scope>FUNCTION</scope>
    <scope>CATALYTIC ACTIVITY</scope>
</reference>
<reference key="2">
    <citation type="journal article" date="2001" name="Arch. Biochem. Biophys.">
        <title>Hydroxylation of limonene enantiomers and analogs by recombinant (-)-limonene 3- and 6-hydroxylases from mint (Mentha) species: evidence for catalysis within sterically constrained active sites.</title>
        <authorList>
            <person name="Wuest M."/>
            <person name="Little D.B."/>
            <person name="Schalk M."/>
            <person name="Croteau R."/>
        </authorList>
    </citation>
    <scope>FUNCTION</scope>
    <scope>CATALYTIC ACTIVITY</scope>
</reference>
<accession>Q6WKZ1</accession>
<keyword id="KW-0256">Endoplasmic reticulum</keyword>
<keyword id="KW-0349">Heme</keyword>
<keyword id="KW-0408">Iron</keyword>
<keyword id="KW-0472">Membrane</keyword>
<keyword id="KW-0479">Metal-binding</keyword>
<keyword id="KW-0503">Monooxygenase</keyword>
<keyword id="KW-0560">Oxidoreductase</keyword>
<keyword id="KW-0735">Signal-anchor</keyword>
<keyword id="KW-0812">Transmembrane</keyword>
<keyword id="KW-1133">Transmembrane helix</keyword>
<evidence type="ECO:0000250" key="1"/>
<evidence type="ECO:0000255" key="2"/>
<evidence type="ECO:0000269" key="3">
    <source>
    </source>
</evidence>
<evidence type="ECO:0000269" key="4">
    <source>
    </source>
</evidence>
<evidence type="ECO:0000305" key="5"/>
<gene>
    <name type="primary">CYP71D18</name>
</gene>
<sequence>MELDLLSAIIILVATYIVSLLINQWRKSKSQQNLPPSPPKLPVIGHLHFLWGGLPQHVFRSIAQKYGPVAHVQLGEVYSVVLSSAEAAKQAMKVLDPNFADRFDGIGSRTMWYDKDDIIFSPYNDHWRQMRRICVTELLSPKNVRSFGYIRQEEIERLIRLLGSSGGAPVDVTEEVSKMSCVVVCRAAFGSVLKDQGSLAELVKESLALASGFELADLYPSSWLLNLLSLNKYRLQRMRRRLDHILDGFLEEHREKKSGEFGGEDIVDVLFRMQKGSDIKIPITSNCIKGFIFDTFSAGAETSSTTISWALSELMRNPAKMAKVQAEVREALKGKTVVDLSEVQELKYLRSVLKETLRLHPPFPLIPRQSREECEVNGYTIPAKTRIFINVWAIGRDPQYWEDPDTFRPERFDEVSRDFMGNDFEFIPFGAGRRICPGLHFGLANVEIPLAQLLYHFDWKLPQGMTDADLDMTETPGLSGPKKKNVCLVPTLYKSP</sequence>
<feature type="chain" id="PRO_0000389498" description="Cytochrome P450 71D18">
    <location>
        <begin position="1"/>
        <end position="496"/>
    </location>
</feature>
<feature type="transmembrane region" description="Helical; Signal-anchor for type II membrane protein" evidence="2">
    <location>
        <begin position="2"/>
        <end position="22"/>
    </location>
</feature>
<feature type="binding site" description="axial binding residue" evidence="1">
    <location>
        <position position="436"/>
    </location>
    <ligand>
        <name>heme</name>
        <dbReference type="ChEBI" id="CHEBI:30413"/>
    </ligand>
    <ligandPart>
        <name>Fe</name>
        <dbReference type="ChEBI" id="CHEBI:18248"/>
    </ligandPart>
</feature>
<name>C71DI_MENGR</name>
<comment type="function">
    <text evidence="3 4">Hydroxylates (-)-(4S)-limonene to (-)-trans-carveol, a precursor of (-)-carvone. Fluorinated substrate analogs are hydroxylated with the same regio- and stereochemistry.</text>
</comment>
<comment type="catalytic activity">
    <reaction evidence="3 4">
        <text>(4S)-limonene + reduced [NADPH--hemoprotein reductase] + O2 = (1S,5R)-carveol + oxidized [NADPH--hemoprotein reductase] + H2O + H(+)</text>
        <dbReference type="Rhea" id="RHEA:17945"/>
        <dbReference type="Rhea" id="RHEA-COMP:11964"/>
        <dbReference type="Rhea" id="RHEA-COMP:11965"/>
        <dbReference type="ChEBI" id="CHEBI:15377"/>
        <dbReference type="ChEBI" id="CHEBI:15378"/>
        <dbReference type="ChEBI" id="CHEBI:15379"/>
        <dbReference type="ChEBI" id="CHEBI:15383"/>
        <dbReference type="ChEBI" id="CHEBI:15389"/>
        <dbReference type="ChEBI" id="CHEBI:57618"/>
        <dbReference type="ChEBI" id="CHEBI:58210"/>
        <dbReference type="EC" id="1.14.14.51"/>
    </reaction>
</comment>
<comment type="cofactor">
    <cofactor evidence="1">
        <name>heme</name>
        <dbReference type="ChEBI" id="CHEBI:30413"/>
    </cofactor>
</comment>
<comment type="subcellular location">
    <subcellularLocation>
        <location evidence="5">Endoplasmic reticulum membrane</location>
        <topology evidence="5">Single-pass type II membrane protein</topology>
    </subcellularLocation>
</comment>
<comment type="similarity">
    <text evidence="5">Belongs to the cytochrome P450 family.</text>
</comment>
<organism>
    <name type="scientific">Mentha gracilis</name>
    <name type="common">Gingermint</name>
    <dbReference type="NCBI Taxonomy" id="241069"/>
    <lineage>
        <taxon>Eukaryota</taxon>
        <taxon>Viridiplantae</taxon>
        <taxon>Streptophyta</taxon>
        <taxon>Embryophyta</taxon>
        <taxon>Tracheophyta</taxon>
        <taxon>Spermatophyta</taxon>
        <taxon>Magnoliopsida</taxon>
        <taxon>eudicotyledons</taxon>
        <taxon>Gunneridae</taxon>
        <taxon>Pentapetalae</taxon>
        <taxon>asterids</taxon>
        <taxon>lamiids</taxon>
        <taxon>Lamiales</taxon>
        <taxon>Lamiaceae</taxon>
        <taxon>Nepetoideae</taxon>
        <taxon>Mentheae</taxon>
        <taxon>Menthinae</taxon>
        <taxon>Mentha</taxon>
    </lineage>
</organism>
<protein>
    <recommendedName>
        <fullName>Cytochrome P450 71D18</fullName>
        <ecNumber evidence="3 4">1.14.14.51</ecNumber>
    </recommendedName>
    <alternativeName>
        <fullName>(-)-(4S)-Limonene-6-hydroxylase</fullName>
    </alternativeName>
</protein>